<accession>Q6MEG4</accession>
<feature type="chain" id="PRO_0000108676" description="Ribosomal RNA small subunit methyltransferase H">
    <location>
        <begin position="1"/>
        <end position="316"/>
    </location>
</feature>
<feature type="binding site" evidence="1">
    <location>
        <begin position="36"/>
        <end position="38"/>
    </location>
    <ligand>
        <name>S-adenosyl-L-methionine</name>
        <dbReference type="ChEBI" id="CHEBI:59789"/>
    </ligand>
</feature>
<feature type="binding site" evidence="1">
    <location>
        <position position="56"/>
    </location>
    <ligand>
        <name>S-adenosyl-L-methionine</name>
        <dbReference type="ChEBI" id="CHEBI:59789"/>
    </ligand>
</feature>
<feature type="binding site" evidence="1">
    <location>
        <position position="83"/>
    </location>
    <ligand>
        <name>S-adenosyl-L-methionine</name>
        <dbReference type="ChEBI" id="CHEBI:59789"/>
    </ligand>
</feature>
<feature type="binding site" evidence="1">
    <location>
        <position position="104"/>
    </location>
    <ligand>
        <name>S-adenosyl-L-methionine</name>
        <dbReference type="ChEBI" id="CHEBI:59789"/>
    </ligand>
</feature>
<feature type="binding site" evidence="1">
    <location>
        <position position="111"/>
    </location>
    <ligand>
        <name>S-adenosyl-L-methionine</name>
        <dbReference type="ChEBI" id="CHEBI:59789"/>
    </ligand>
</feature>
<organism>
    <name type="scientific">Protochlamydia amoebophila (strain UWE25)</name>
    <dbReference type="NCBI Taxonomy" id="264201"/>
    <lineage>
        <taxon>Bacteria</taxon>
        <taxon>Pseudomonadati</taxon>
        <taxon>Chlamydiota</taxon>
        <taxon>Chlamydiia</taxon>
        <taxon>Parachlamydiales</taxon>
        <taxon>Parachlamydiaceae</taxon>
        <taxon>Candidatus Protochlamydia</taxon>
    </lineage>
</organism>
<evidence type="ECO:0000255" key="1">
    <source>
        <dbReference type="HAMAP-Rule" id="MF_01007"/>
    </source>
</evidence>
<proteinExistence type="inferred from homology"/>
<dbReference type="EC" id="2.1.1.199" evidence="1"/>
<dbReference type="EMBL" id="BX908798">
    <property type="protein sequence ID" value="CAF23035.1"/>
    <property type="molecule type" value="Genomic_DNA"/>
</dbReference>
<dbReference type="RefSeq" id="WP_011174861.1">
    <property type="nucleotide sequence ID" value="NC_005861.2"/>
</dbReference>
<dbReference type="SMR" id="Q6MEG4"/>
<dbReference type="STRING" id="264201.pc0311"/>
<dbReference type="KEGG" id="pcu:PC_RS01505"/>
<dbReference type="eggNOG" id="COG0275">
    <property type="taxonomic scope" value="Bacteria"/>
</dbReference>
<dbReference type="HOGENOM" id="CLU_038422_3_0_0"/>
<dbReference type="OrthoDB" id="9806637at2"/>
<dbReference type="Proteomes" id="UP000000529">
    <property type="component" value="Chromosome"/>
</dbReference>
<dbReference type="GO" id="GO:0005737">
    <property type="term" value="C:cytoplasm"/>
    <property type="evidence" value="ECO:0007669"/>
    <property type="project" value="UniProtKB-SubCell"/>
</dbReference>
<dbReference type="GO" id="GO:0071424">
    <property type="term" value="F:rRNA (cytosine-N4-)-methyltransferase activity"/>
    <property type="evidence" value="ECO:0007669"/>
    <property type="project" value="UniProtKB-UniRule"/>
</dbReference>
<dbReference type="GO" id="GO:0070475">
    <property type="term" value="P:rRNA base methylation"/>
    <property type="evidence" value="ECO:0007669"/>
    <property type="project" value="UniProtKB-UniRule"/>
</dbReference>
<dbReference type="FunFam" id="1.10.150.170:FF:000003">
    <property type="entry name" value="Ribosomal RNA small subunit methyltransferase H"/>
    <property type="match status" value="1"/>
</dbReference>
<dbReference type="Gene3D" id="1.10.150.170">
    <property type="entry name" value="Putative methyltransferase TM0872, insert domain"/>
    <property type="match status" value="1"/>
</dbReference>
<dbReference type="Gene3D" id="3.40.50.150">
    <property type="entry name" value="Vaccinia Virus protein VP39"/>
    <property type="match status" value="1"/>
</dbReference>
<dbReference type="HAMAP" id="MF_01007">
    <property type="entry name" value="16SrRNA_methyltr_H"/>
    <property type="match status" value="1"/>
</dbReference>
<dbReference type="InterPro" id="IPR002903">
    <property type="entry name" value="RsmH"/>
</dbReference>
<dbReference type="InterPro" id="IPR023397">
    <property type="entry name" value="SAM-dep_MeTrfase_MraW_recog"/>
</dbReference>
<dbReference type="InterPro" id="IPR029063">
    <property type="entry name" value="SAM-dependent_MTases_sf"/>
</dbReference>
<dbReference type="NCBIfam" id="TIGR00006">
    <property type="entry name" value="16S rRNA (cytosine(1402)-N(4))-methyltransferase RsmH"/>
    <property type="match status" value="1"/>
</dbReference>
<dbReference type="PANTHER" id="PTHR11265:SF0">
    <property type="entry name" value="12S RRNA N4-METHYLCYTIDINE METHYLTRANSFERASE"/>
    <property type="match status" value="1"/>
</dbReference>
<dbReference type="PANTHER" id="PTHR11265">
    <property type="entry name" value="S-ADENOSYL-METHYLTRANSFERASE MRAW"/>
    <property type="match status" value="1"/>
</dbReference>
<dbReference type="Pfam" id="PF01795">
    <property type="entry name" value="Methyltransf_5"/>
    <property type="match status" value="1"/>
</dbReference>
<dbReference type="PIRSF" id="PIRSF004486">
    <property type="entry name" value="MraW"/>
    <property type="match status" value="1"/>
</dbReference>
<dbReference type="SUPFAM" id="SSF81799">
    <property type="entry name" value="Putative methyltransferase TM0872, insert domain"/>
    <property type="match status" value="1"/>
</dbReference>
<dbReference type="SUPFAM" id="SSF53335">
    <property type="entry name" value="S-adenosyl-L-methionine-dependent methyltransferases"/>
    <property type="match status" value="1"/>
</dbReference>
<reference key="1">
    <citation type="journal article" date="2004" name="Science">
        <title>Illuminating the evolutionary history of chlamydiae.</title>
        <authorList>
            <person name="Horn M."/>
            <person name="Collingro A."/>
            <person name="Schmitz-Esser S."/>
            <person name="Beier C.L."/>
            <person name="Purkhold U."/>
            <person name="Fartmann B."/>
            <person name="Brandt P."/>
            <person name="Nyakatura G.J."/>
            <person name="Droege M."/>
            <person name="Frishman D."/>
            <person name="Rattei T."/>
            <person name="Mewes H.-W."/>
            <person name="Wagner M."/>
        </authorList>
    </citation>
    <scope>NUCLEOTIDE SEQUENCE [LARGE SCALE GENOMIC DNA]</scope>
    <source>
        <strain>UWE25</strain>
    </source>
</reference>
<comment type="function">
    <text evidence="1">Specifically methylates the N4 position of cytidine in position 1402 (C1402) of 16S rRNA.</text>
</comment>
<comment type="catalytic activity">
    <reaction evidence="1">
        <text>cytidine(1402) in 16S rRNA + S-adenosyl-L-methionine = N(4)-methylcytidine(1402) in 16S rRNA + S-adenosyl-L-homocysteine + H(+)</text>
        <dbReference type="Rhea" id="RHEA:42928"/>
        <dbReference type="Rhea" id="RHEA-COMP:10286"/>
        <dbReference type="Rhea" id="RHEA-COMP:10287"/>
        <dbReference type="ChEBI" id="CHEBI:15378"/>
        <dbReference type="ChEBI" id="CHEBI:57856"/>
        <dbReference type="ChEBI" id="CHEBI:59789"/>
        <dbReference type="ChEBI" id="CHEBI:74506"/>
        <dbReference type="ChEBI" id="CHEBI:82748"/>
        <dbReference type="EC" id="2.1.1.199"/>
    </reaction>
</comment>
<comment type="subcellular location">
    <subcellularLocation>
        <location evidence="1">Cytoplasm</location>
    </subcellularLocation>
</comment>
<comment type="similarity">
    <text evidence="1">Belongs to the methyltransferase superfamily. RsmH family.</text>
</comment>
<name>RSMH_PARUW</name>
<keyword id="KW-0963">Cytoplasm</keyword>
<keyword id="KW-0489">Methyltransferase</keyword>
<keyword id="KW-1185">Reference proteome</keyword>
<keyword id="KW-0698">rRNA processing</keyword>
<keyword id="KW-0949">S-adenosyl-L-methionine</keyword>
<keyword id="KW-0808">Transferase</keyword>
<gene>
    <name evidence="1" type="primary">rsmH</name>
    <name type="synonym">mraW</name>
    <name type="ordered locus">pc0311</name>
</gene>
<protein>
    <recommendedName>
        <fullName evidence="1">Ribosomal RNA small subunit methyltransferase H</fullName>
        <ecNumber evidence="1">2.1.1.199</ecNumber>
    </recommendedName>
    <alternativeName>
        <fullName evidence="1">16S rRNA m(4)C1402 methyltransferase</fullName>
    </alternativeName>
    <alternativeName>
        <fullName evidence="1">rRNA (cytosine-N(4)-)-methyltransferase RsmH</fullName>
    </alternativeName>
</protein>
<sequence>MPIPFYPHRSVLLEEVIEAFQPVQLKVFIDGTLGAGGHAEAILEHHPEIELYLGIDQDPNALNIANKRLEKWKQKILLKQGNFSQFDIFLKEIGFSSMDGLLVDLGVSSMQLDQPERGFSFSKDGPLDMRMNPEGKLTAADIVNTWSEHDLGKIFRDYGEEKKWRLAARTIVQARQVKQILTTTDLANLLKPAFAWNPKKGINPLTLIFQALRICVNRELDVLEQLVSKTFDYLKPGGRVAVISFHSLEDRIVKNELRLAASDKWETTGLGSGLFRDKKPVAKLVNRKPICPHEKEIKENPRSRSAKFRIAEKLEG</sequence>